<protein>
    <recommendedName>
        <fullName>Putative 4-hydroxy-4-methyl-2-oxoglutarate aldolase</fullName>
        <shortName>HMG aldolase</shortName>
        <ecNumber>4.1.3.17</ecNumber>
    </recommendedName>
    <alternativeName>
        <fullName>Oxaloacetate decarboxylase</fullName>
        <shortName>OAA decarboxylase</shortName>
        <ecNumber>4.1.1.112</ecNumber>
    </alternativeName>
    <alternativeName>
        <fullName>Regulator of ribonuclease activity homolog</fullName>
    </alternativeName>
    <alternativeName>
        <fullName>RraA-like protein</fullName>
    </alternativeName>
</protein>
<dbReference type="EC" id="4.1.3.17"/>
<dbReference type="EC" id="4.1.1.112"/>
<dbReference type="EMBL" id="AM286690">
    <property type="protein sequence ID" value="CAL16693.1"/>
    <property type="molecule type" value="Genomic_DNA"/>
</dbReference>
<dbReference type="SMR" id="Q0VQ55"/>
<dbReference type="STRING" id="393595.ABO_1245"/>
<dbReference type="KEGG" id="abo:ABO_1245"/>
<dbReference type="eggNOG" id="COG0684">
    <property type="taxonomic scope" value="Bacteria"/>
</dbReference>
<dbReference type="HOGENOM" id="CLU_072626_4_0_6"/>
<dbReference type="OrthoDB" id="943692at2"/>
<dbReference type="Proteomes" id="UP000008871">
    <property type="component" value="Chromosome"/>
</dbReference>
<dbReference type="GO" id="GO:0047443">
    <property type="term" value="F:4-hydroxy-4-methyl-2-oxoglutarate aldolase activity"/>
    <property type="evidence" value="ECO:0007669"/>
    <property type="project" value="UniProtKB-EC"/>
</dbReference>
<dbReference type="GO" id="GO:0046872">
    <property type="term" value="F:metal ion binding"/>
    <property type="evidence" value="ECO:0007669"/>
    <property type="project" value="UniProtKB-KW"/>
</dbReference>
<dbReference type="GO" id="GO:0008948">
    <property type="term" value="F:oxaloacetate decarboxylase activity"/>
    <property type="evidence" value="ECO:0007669"/>
    <property type="project" value="UniProtKB-EC"/>
</dbReference>
<dbReference type="GO" id="GO:0008428">
    <property type="term" value="F:ribonuclease inhibitor activity"/>
    <property type="evidence" value="ECO:0007669"/>
    <property type="project" value="InterPro"/>
</dbReference>
<dbReference type="GO" id="GO:0051252">
    <property type="term" value="P:regulation of RNA metabolic process"/>
    <property type="evidence" value="ECO:0007669"/>
    <property type="project" value="InterPro"/>
</dbReference>
<dbReference type="CDD" id="cd16841">
    <property type="entry name" value="RraA_family"/>
    <property type="match status" value="1"/>
</dbReference>
<dbReference type="Gene3D" id="3.50.30.40">
    <property type="entry name" value="Ribonuclease E inhibitor RraA/RraA-like"/>
    <property type="match status" value="1"/>
</dbReference>
<dbReference type="InterPro" id="IPR010203">
    <property type="entry name" value="RraA"/>
</dbReference>
<dbReference type="InterPro" id="IPR005493">
    <property type="entry name" value="RraA/RraA-like"/>
</dbReference>
<dbReference type="InterPro" id="IPR036704">
    <property type="entry name" value="RraA/RraA-like_sf"/>
</dbReference>
<dbReference type="NCBIfam" id="TIGR01935">
    <property type="entry name" value="NOT-MenG"/>
    <property type="match status" value="1"/>
</dbReference>
<dbReference type="NCBIfam" id="NF006875">
    <property type="entry name" value="PRK09372.1"/>
    <property type="match status" value="1"/>
</dbReference>
<dbReference type="NCBIfam" id="NF009134">
    <property type="entry name" value="PRK12487.1"/>
    <property type="match status" value="1"/>
</dbReference>
<dbReference type="PANTHER" id="PTHR33254">
    <property type="entry name" value="4-HYDROXY-4-METHYL-2-OXOGLUTARATE ALDOLASE 3-RELATED"/>
    <property type="match status" value="1"/>
</dbReference>
<dbReference type="PANTHER" id="PTHR33254:SF29">
    <property type="entry name" value="REGULATOR OF RIBONUCLEASE ACTIVITY A"/>
    <property type="match status" value="1"/>
</dbReference>
<dbReference type="Pfam" id="PF03737">
    <property type="entry name" value="RraA-like"/>
    <property type="match status" value="1"/>
</dbReference>
<dbReference type="SUPFAM" id="SSF89562">
    <property type="entry name" value="RraA-like"/>
    <property type="match status" value="1"/>
</dbReference>
<reference key="1">
    <citation type="journal article" date="2006" name="Nat. Biotechnol.">
        <title>Genome sequence of the ubiquitous hydrocarbon-degrading marine bacterium Alcanivorax borkumensis.</title>
        <authorList>
            <person name="Schneiker S."/>
            <person name="Martins dos Santos V.A.P."/>
            <person name="Bartels D."/>
            <person name="Bekel T."/>
            <person name="Brecht M."/>
            <person name="Buhrmester J."/>
            <person name="Chernikova T.N."/>
            <person name="Denaro R."/>
            <person name="Ferrer M."/>
            <person name="Gertler C."/>
            <person name="Goesmann A."/>
            <person name="Golyshina O.V."/>
            <person name="Kaminski F."/>
            <person name="Khachane A.N."/>
            <person name="Lang S."/>
            <person name="Linke B."/>
            <person name="McHardy A.C."/>
            <person name="Meyer F."/>
            <person name="Nechitaylo T."/>
            <person name="Puehler A."/>
            <person name="Regenhardt D."/>
            <person name="Rupp O."/>
            <person name="Sabirova J.S."/>
            <person name="Selbitschka W."/>
            <person name="Yakimov M.M."/>
            <person name="Timmis K.N."/>
            <person name="Vorhoelter F.-J."/>
            <person name="Weidner S."/>
            <person name="Kaiser O."/>
            <person name="Golyshin P.N."/>
        </authorList>
    </citation>
    <scope>NUCLEOTIDE SEQUENCE [LARGE SCALE GENOMIC DNA]</scope>
    <source>
        <strain>ATCC 700651 / DSM 11573 / NCIMB 13689 / SK2</strain>
    </source>
</reference>
<proteinExistence type="inferred from homology"/>
<keyword id="KW-0456">Lyase</keyword>
<keyword id="KW-0479">Metal-binding</keyword>
<keyword id="KW-1185">Reference proteome</keyword>
<organism>
    <name type="scientific">Alcanivorax borkumensis (strain ATCC 700651 / DSM 11573 / NCIMB 13689 / SK2)</name>
    <dbReference type="NCBI Taxonomy" id="393595"/>
    <lineage>
        <taxon>Bacteria</taxon>
        <taxon>Pseudomonadati</taxon>
        <taxon>Pseudomonadota</taxon>
        <taxon>Gammaproteobacteria</taxon>
        <taxon>Oceanospirillales</taxon>
        <taxon>Alcanivoracaceae</taxon>
        <taxon>Alcanivorax</taxon>
    </lineage>
</organism>
<accession>Q0VQ55</accession>
<sequence length="160" mass="16970">MTFVTCDLCDDNADSVCVVTGLNWLSYGGRDAFGGEIVTVKCFEDNSRVKEHLGTDGKGKVLVVDGGGSLRNALIGDMIAENAVKNGWEGVIIYGACRDVDALAKLDIGVITLGCVPIKSVRRDEGQLNIEITFGGVVFRPGEFVYADNNGIITAPKALV</sequence>
<name>RRAAH_ALCBS</name>
<feature type="chain" id="PRO_1000013822" description="Putative 4-hydroxy-4-methyl-2-oxoglutarate aldolase">
    <location>
        <begin position="1"/>
        <end position="160"/>
    </location>
</feature>
<feature type="binding site" evidence="1">
    <location>
        <begin position="76"/>
        <end position="79"/>
    </location>
    <ligand>
        <name>substrate</name>
    </ligand>
</feature>
<feature type="binding site" evidence="1">
    <location>
        <position position="98"/>
    </location>
    <ligand>
        <name>substrate</name>
    </ligand>
</feature>
<feature type="binding site" evidence="1">
    <location>
        <position position="99"/>
    </location>
    <ligand>
        <name>a divalent metal cation</name>
        <dbReference type="ChEBI" id="CHEBI:60240"/>
    </ligand>
</feature>
<evidence type="ECO:0000250" key="1"/>
<evidence type="ECO:0000305" key="2"/>
<gene>
    <name type="ordered locus">ABO_1245</name>
</gene>
<comment type="function">
    <text evidence="1">Catalyzes the aldol cleavage of 4-hydroxy-4-methyl-2-oxoglutarate (HMG) into 2 molecules of pyruvate. Also contains a secondary oxaloacetate (OAA) decarboxylase activity due to the common pyruvate enolate transition state formed following C-C bond cleavage in the retro-aldol and decarboxylation reactions (By similarity).</text>
</comment>
<comment type="catalytic activity">
    <reaction>
        <text>4-hydroxy-4-methyl-2-oxoglutarate = 2 pyruvate</text>
        <dbReference type="Rhea" id="RHEA:22748"/>
        <dbReference type="ChEBI" id="CHEBI:15361"/>
        <dbReference type="ChEBI" id="CHEBI:58276"/>
        <dbReference type="EC" id="4.1.3.17"/>
    </reaction>
</comment>
<comment type="catalytic activity">
    <reaction>
        <text>oxaloacetate + H(+) = pyruvate + CO2</text>
        <dbReference type="Rhea" id="RHEA:15641"/>
        <dbReference type="ChEBI" id="CHEBI:15361"/>
        <dbReference type="ChEBI" id="CHEBI:15378"/>
        <dbReference type="ChEBI" id="CHEBI:16452"/>
        <dbReference type="ChEBI" id="CHEBI:16526"/>
        <dbReference type="EC" id="4.1.1.112"/>
    </reaction>
</comment>
<comment type="cofactor">
    <cofactor evidence="1">
        <name>a divalent metal cation</name>
        <dbReference type="ChEBI" id="CHEBI:60240"/>
    </cofactor>
    <text evidence="1">Divalent metal cation.</text>
</comment>
<comment type="subunit">
    <text evidence="1">Homotrimer.</text>
</comment>
<comment type="similarity">
    <text evidence="2">Belongs to the class II aldolase/RraA-like family.</text>
</comment>